<reference key="1">
    <citation type="journal article" date="2001" name="Lancet">
        <title>Whole genome sequencing of meticillin-resistant Staphylococcus aureus.</title>
        <authorList>
            <person name="Kuroda M."/>
            <person name="Ohta T."/>
            <person name="Uchiyama I."/>
            <person name="Baba T."/>
            <person name="Yuzawa H."/>
            <person name="Kobayashi I."/>
            <person name="Cui L."/>
            <person name="Oguchi A."/>
            <person name="Aoki K."/>
            <person name="Nagai Y."/>
            <person name="Lian J.-Q."/>
            <person name="Ito T."/>
            <person name="Kanamori M."/>
            <person name="Matsumaru H."/>
            <person name="Maruyama A."/>
            <person name="Murakami H."/>
            <person name="Hosoyama A."/>
            <person name="Mizutani-Ui Y."/>
            <person name="Takahashi N.K."/>
            <person name="Sawano T."/>
            <person name="Inoue R."/>
            <person name="Kaito C."/>
            <person name="Sekimizu K."/>
            <person name="Hirakawa H."/>
            <person name="Kuhara S."/>
            <person name="Goto S."/>
            <person name="Yabuzaki J."/>
            <person name="Kanehisa M."/>
            <person name="Yamashita A."/>
            <person name="Oshima K."/>
            <person name="Furuya K."/>
            <person name="Yoshino C."/>
            <person name="Shiba T."/>
            <person name="Hattori M."/>
            <person name="Ogasawara N."/>
            <person name="Hayashi H."/>
            <person name="Hiramatsu K."/>
        </authorList>
    </citation>
    <scope>NUCLEOTIDE SEQUENCE [LARGE SCALE GENOMIC DNA]</scope>
    <source>
        <strain>N315</strain>
    </source>
</reference>
<reference key="2">
    <citation type="journal article" date="2005" name="J. Microbiol. Methods">
        <title>Correlation of proteomic and transcriptomic profiles of Staphylococcus aureus during the post-exponential phase of growth.</title>
        <authorList>
            <person name="Scherl A."/>
            <person name="Francois P."/>
            <person name="Bento M."/>
            <person name="Deshusses J.M."/>
            <person name="Charbonnier Y."/>
            <person name="Converset V."/>
            <person name="Huyghe A."/>
            <person name="Walter N."/>
            <person name="Hoogland C."/>
            <person name="Appel R.D."/>
            <person name="Sanchez J.-C."/>
            <person name="Zimmermann-Ivol C.G."/>
            <person name="Corthals G.L."/>
            <person name="Hochstrasser D.F."/>
            <person name="Schrenzel J."/>
        </authorList>
    </citation>
    <scope>IDENTIFICATION BY MASS SPECTROMETRY</scope>
    <source>
        <strain>N315</strain>
    </source>
</reference>
<reference key="3">
    <citation type="submission" date="2007-10" db="UniProtKB">
        <title>Shotgun proteomic analysis of total and membrane protein extracts of S. aureus strain N315.</title>
        <authorList>
            <person name="Vaezzadeh A.R."/>
            <person name="Deshusses J."/>
            <person name="Lescuyer P."/>
            <person name="Hochstrasser D.F."/>
        </authorList>
    </citation>
    <scope>IDENTIFICATION BY MASS SPECTROMETRY [LARGE SCALE ANALYSIS]</scope>
    <source>
        <strain>N315</strain>
    </source>
</reference>
<proteinExistence type="evidence at protein level"/>
<evidence type="ECO:0000250" key="1">
    <source>
        <dbReference type="UniProtKB" id="P0A988"/>
    </source>
</evidence>
<evidence type="ECO:0000305" key="2"/>
<organism>
    <name type="scientific">Staphylococcus aureus (strain N315)</name>
    <dbReference type="NCBI Taxonomy" id="158879"/>
    <lineage>
        <taxon>Bacteria</taxon>
        <taxon>Bacillati</taxon>
        <taxon>Bacillota</taxon>
        <taxon>Bacilli</taxon>
        <taxon>Bacillales</taxon>
        <taxon>Staphylococcaceae</taxon>
        <taxon>Staphylococcus</taxon>
    </lineage>
</organism>
<comment type="function">
    <text evidence="1">Confers DNA tethering and processivity to DNA polymerases and other proteins. Acts as a clamp, forming a ring around DNA (a reaction catalyzed by the clamp-loading complex) which diffuses in an ATP-independent manner freely and bidirectionally along dsDNA. Initially characterized for its ability to contact the catalytic subunit of DNA polymerase III (Pol III), a complex, multichain enzyme responsible for most of the replicative synthesis in bacteria; Pol III exhibits 3'-5' exonuclease proofreading activity. The beta chain is required for initiation of replication as well as for processivity of DNA replication.</text>
</comment>
<comment type="subunit">
    <text evidence="1">Forms a ring-shaped head-to-tail homodimer around DNA which binds and tethers DNA polymerases and other proteins to the DNA. The DNA replisome complex has a single clamp-loading complex (3 tau and 1 each of delta, delta', psi and chi subunits) which binds 3 Pol III cores (1 core on the leading strand and 2 on the lagging strand) each with a beta sliding clamp dimer. Additional proteins in the replisome are other copies of gamma, psi and chi, Ssb, DNA helicase and RNA primase.</text>
</comment>
<comment type="subcellular location">
    <subcellularLocation>
        <location evidence="1">Cytoplasm</location>
    </subcellularLocation>
</comment>
<comment type="similarity">
    <text evidence="2">Belongs to the beta sliding clamp family.</text>
</comment>
<keyword id="KW-0963">Cytoplasm</keyword>
<keyword id="KW-0235">DNA replication</keyword>
<keyword id="KW-0238">DNA-binding</keyword>
<keyword id="KW-0239">DNA-directed DNA polymerase</keyword>
<keyword id="KW-0548">Nucleotidyltransferase</keyword>
<keyword id="KW-0808">Transferase</keyword>
<accession>P99103</accession>
<accession>P50029</accession>
<sequence>MMEFTIKRDYFITQLNDTLKAISPRTTLPILTGIKIDAKEHEVILTGSDSEISIEITIPKTVDGEDIVNISETGSVVLPGRFFVDIIKKLPGKDVKLSTNEQFQTLITSGHSEFNLSGLDPDQYPLLPQVSRDDAIQLSVKVLKNVIAQTNFAVSTSETRPVLTGVNWLIQENELICTATDSHRLAVRKLQLEDVSENKNVIIPGKALAELNKIMSDNEEDIDIFFASNQVLFKVGNVNFISRLLEGHYPDTTRLFPENYEIKLSIDNGEFYHAIDRASLLAREGGNNVIKLSTGDDVVELSSTSPEIGTVKEEVDANDVEGGSLKISFNSKYMMDALKAIDNDEVEVEFFGTMKPFILKPKGDDSVTQLILPIRTY</sequence>
<dbReference type="EMBL" id="BA000018">
    <property type="protein sequence ID" value="BAB41218.1"/>
    <property type="molecule type" value="Genomic_DNA"/>
</dbReference>
<dbReference type="RefSeq" id="WP_000969811.1">
    <property type="nucleotide sequence ID" value="NC_002745.2"/>
</dbReference>
<dbReference type="SMR" id="P99103"/>
<dbReference type="EnsemblBacteria" id="BAB41218">
    <property type="protein sequence ID" value="BAB41218"/>
    <property type="gene ID" value="BAB41218"/>
</dbReference>
<dbReference type="KEGG" id="sau:SA0002"/>
<dbReference type="HOGENOM" id="CLU_038149_2_0_9"/>
<dbReference type="GO" id="GO:0005737">
    <property type="term" value="C:cytoplasm"/>
    <property type="evidence" value="ECO:0007669"/>
    <property type="project" value="UniProtKB-SubCell"/>
</dbReference>
<dbReference type="GO" id="GO:0009360">
    <property type="term" value="C:DNA polymerase III complex"/>
    <property type="evidence" value="ECO:0007669"/>
    <property type="project" value="InterPro"/>
</dbReference>
<dbReference type="GO" id="GO:0008408">
    <property type="term" value="F:3'-5' exonuclease activity"/>
    <property type="evidence" value="ECO:0007669"/>
    <property type="project" value="InterPro"/>
</dbReference>
<dbReference type="GO" id="GO:0003677">
    <property type="term" value="F:DNA binding"/>
    <property type="evidence" value="ECO:0007669"/>
    <property type="project" value="UniProtKB-KW"/>
</dbReference>
<dbReference type="GO" id="GO:0003887">
    <property type="term" value="F:DNA-directed DNA polymerase activity"/>
    <property type="evidence" value="ECO:0007669"/>
    <property type="project" value="UniProtKB-KW"/>
</dbReference>
<dbReference type="GO" id="GO:0006271">
    <property type="term" value="P:DNA strand elongation involved in DNA replication"/>
    <property type="evidence" value="ECO:0007669"/>
    <property type="project" value="TreeGrafter"/>
</dbReference>
<dbReference type="CDD" id="cd00140">
    <property type="entry name" value="beta_clamp"/>
    <property type="match status" value="1"/>
</dbReference>
<dbReference type="FunFam" id="3.10.150.10:FF:000007">
    <property type="entry name" value="Beta sliding clamp"/>
    <property type="match status" value="1"/>
</dbReference>
<dbReference type="Gene3D" id="3.70.10.10">
    <property type="match status" value="1"/>
</dbReference>
<dbReference type="Gene3D" id="3.10.150.10">
    <property type="entry name" value="DNA Polymerase III, subunit A, domain 2"/>
    <property type="match status" value="1"/>
</dbReference>
<dbReference type="InterPro" id="IPR046938">
    <property type="entry name" value="DNA_clamp_sf"/>
</dbReference>
<dbReference type="InterPro" id="IPR001001">
    <property type="entry name" value="DNA_polIII_beta"/>
</dbReference>
<dbReference type="InterPro" id="IPR022635">
    <property type="entry name" value="DNA_polIII_beta_C"/>
</dbReference>
<dbReference type="InterPro" id="IPR022637">
    <property type="entry name" value="DNA_polIII_beta_cen"/>
</dbReference>
<dbReference type="InterPro" id="IPR022634">
    <property type="entry name" value="DNA_polIII_beta_N"/>
</dbReference>
<dbReference type="NCBIfam" id="TIGR00663">
    <property type="entry name" value="dnan"/>
    <property type="match status" value="1"/>
</dbReference>
<dbReference type="PANTHER" id="PTHR30478:SF0">
    <property type="entry name" value="BETA SLIDING CLAMP"/>
    <property type="match status" value="1"/>
</dbReference>
<dbReference type="PANTHER" id="PTHR30478">
    <property type="entry name" value="DNA POLYMERASE III SUBUNIT BETA"/>
    <property type="match status" value="1"/>
</dbReference>
<dbReference type="Pfam" id="PF00712">
    <property type="entry name" value="DNA_pol3_beta"/>
    <property type="match status" value="1"/>
</dbReference>
<dbReference type="Pfam" id="PF02767">
    <property type="entry name" value="DNA_pol3_beta_2"/>
    <property type="match status" value="1"/>
</dbReference>
<dbReference type="Pfam" id="PF02768">
    <property type="entry name" value="DNA_pol3_beta_3"/>
    <property type="match status" value="1"/>
</dbReference>
<dbReference type="PIRSF" id="PIRSF000804">
    <property type="entry name" value="DNA_pol_III_b"/>
    <property type="match status" value="1"/>
</dbReference>
<dbReference type="SMART" id="SM00480">
    <property type="entry name" value="POL3Bc"/>
    <property type="match status" value="1"/>
</dbReference>
<dbReference type="SUPFAM" id="SSF55979">
    <property type="entry name" value="DNA clamp"/>
    <property type="match status" value="3"/>
</dbReference>
<name>DPO3B_STAAN</name>
<protein>
    <recommendedName>
        <fullName>Beta sliding clamp</fullName>
        <shortName>Beta clamp</shortName>
        <shortName>Sliding clamp</shortName>
    </recommendedName>
    <alternativeName>
        <fullName>Beta-clamp processivity factor</fullName>
    </alternativeName>
    <alternativeName>
        <fullName>DNA polymerase III beta sliding clamp subunit</fullName>
    </alternativeName>
    <alternativeName>
        <fullName>DNA polymerase III subunit beta</fullName>
    </alternativeName>
</protein>
<gene>
    <name type="primary">dnaN</name>
    <name type="ordered locus">SA0002</name>
</gene>
<feature type="chain" id="PRO_0000105464" description="Beta sliding clamp">
    <location>
        <begin position="1"/>
        <end position="377"/>
    </location>
</feature>